<sequence>MQLFPVMLATLCIVLQLLIGSSALATTNRHVSNSHWLPAVATWYGSPNGDGSDGGACGYGTLVDVKPLHARVGAVNPILFKNGEGCGACYKVRCLDKSICSRRAVTVIITDECPGCSKTSTHFDLSGAVFGRLAIAGESGPLRNRGLIPVIYRRTACKYRGKNIAFHVNEGSTDFWLSLLVEFEDGEGDIGSMHIRQAGAREWLEMKHVWGANWCIIGGPLKGPFSIKLTTLSAGKTLSATDVVPRNWAPKATYSSRLNFSPVL</sequence>
<organism>
    <name type="scientific">Arabidopsis thaliana</name>
    <name type="common">Mouse-ear cress</name>
    <dbReference type="NCBI Taxonomy" id="3702"/>
    <lineage>
        <taxon>Eukaryota</taxon>
        <taxon>Viridiplantae</taxon>
        <taxon>Streptophyta</taxon>
        <taxon>Embryophyta</taxon>
        <taxon>Tracheophyta</taxon>
        <taxon>Spermatophyta</taxon>
        <taxon>Magnoliopsida</taxon>
        <taxon>eudicotyledons</taxon>
        <taxon>Gunneridae</taxon>
        <taxon>Pentapetalae</taxon>
        <taxon>rosids</taxon>
        <taxon>malvids</taxon>
        <taxon>Brassicales</taxon>
        <taxon>Brassicaceae</taxon>
        <taxon>Camelineae</taxon>
        <taxon>Arabidopsis</taxon>
    </lineage>
</organism>
<reference key="1">
    <citation type="journal article" date="1999" name="Nature">
        <title>Sequence and analysis of chromosome 4 of the plant Arabidopsis thaliana.</title>
        <authorList>
            <person name="Mayer K.F.X."/>
            <person name="Schueller C."/>
            <person name="Wambutt R."/>
            <person name="Murphy G."/>
            <person name="Volckaert G."/>
            <person name="Pohl T."/>
            <person name="Duesterhoeft A."/>
            <person name="Stiekema W."/>
            <person name="Entian K.-D."/>
            <person name="Terryn N."/>
            <person name="Harris B."/>
            <person name="Ansorge W."/>
            <person name="Brandt P."/>
            <person name="Grivell L.A."/>
            <person name="Rieger M."/>
            <person name="Weichselgartner M."/>
            <person name="de Simone V."/>
            <person name="Obermaier B."/>
            <person name="Mache R."/>
            <person name="Mueller M."/>
            <person name="Kreis M."/>
            <person name="Delseny M."/>
            <person name="Puigdomenech P."/>
            <person name="Watson M."/>
            <person name="Schmidtheini T."/>
            <person name="Reichert B."/>
            <person name="Portetelle D."/>
            <person name="Perez-Alonso M."/>
            <person name="Boutry M."/>
            <person name="Bancroft I."/>
            <person name="Vos P."/>
            <person name="Hoheisel J."/>
            <person name="Zimmermann W."/>
            <person name="Wedler H."/>
            <person name="Ridley P."/>
            <person name="Langham S.-A."/>
            <person name="McCullagh B."/>
            <person name="Bilham L."/>
            <person name="Robben J."/>
            <person name="van der Schueren J."/>
            <person name="Grymonprez B."/>
            <person name="Chuang Y.-J."/>
            <person name="Vandenbussche F."/>
            <person name="Braeken M."/>
            <person name="Weltjens I."/>
            <person name="Voet M."/>
            <person name="Bastiaens I."/>
            <person name="Aert R."/>
            <person name="Defoor E."/>
            <person name="Weitzenegger T."/>
            <person name="Bothe G."/>
            <person name="Ramsperger U."/>
            <person name="Hilbert H."/>
            <person name="Braun M."/>
            <person name="Holzer E."/>
            <person name="Brandt A."/>
            <person name="Peters S."/>
            <person name="van Staveren M."/>
            <person name="Dirkse W."/>
            <person name="Mooijman P."/>
            <person name="Klein Lankhorst R."/>
            <person name="Rose M."/>
            <person name="Hauf J."/>
            <person name="Koetter P."/>
            <person name="Berneiser S."/>
            <person name="Hempel S."/>
            <person name="Feldpausch M."/>
            <person name="Lamberth S."/>
            <person name="Van den Daele H."/>
            <person name="De Keyser A."/>
            <person name="Buysshaert C."/>
            <person name="Gielen J."/>
            <person name="Villarroel R."/>
            <person name="De Clercq R."/>
            <person name="van Montagu M."/>
            <person name="Rogers J."/>
            <person name="Cronin A."/>
            <person name="Quail M.A."/>
            <person name="Bray-Allen S."/>
            <person name="Clark L."/>
            <person name="Doggett J."/>
            <person name="Hall S."/>
            <person name="Kay M."/>
            <person name="Lennard N."/>
            <person name="McLay K."/>
            <person name="Mayes R."/>
            <person name="Pettett A."/>
            <person name="Rajandream M.A."/>
            <person name="Lyne M."/>
            <person name="Benes V."/>
            <person name="Rechmann S."/>
            <person name="Borkova D."/>
            <person name="Bloecker H."/>
            <person name="Scharfe M."/>
            <person name="Grimm M."/>
            <person name="Loehnert T.-H."/>
            <person name="Dose S."/>
            <person name="de Haan M."/>
            <person name="Maarse A.C."/>
            <person name="Schaefer M."/>
            <person name="Mueller-Auer S."/>
            <person name="Gabel C."/>
            <person name="Fuchs M."/>
            <person name="Fartmann B."/>
            <person name="Granderath K."/>
            <person name="Dauner D."/>
            <person name="Herzl A."/>
            <person name="Neumann S."/>
            <person name="Argiriou A."/>
            <person name="Vitale D."/>
            <person name="Liguori R."/>
            <person name="Piravandi E."/>
            <person name="Massenet O."/>
            <person name="Quigley F."/>
            <person name="Clabauld G."/>
            <person name="Muendlein A."/>
            <person name="Felber R."/>
            <person name="Schnabl S."/>
            <person name="Hiller R."/>
            <person name="Schmidt W."/>
            <person name="Lecharny A."/>
            <person name="Aubourg S."/>
            <person name="Chefdor F."/>
            <person name="Cooke R."/>
            <person name="Berger C."/>
            <person name="Monfort A."/>
            <person name="Casacuberta E."/>
            <person name="Gibbons T."/>
            <person name="Weber N."/>
            <person name="Vandenbol M."/>
            <person name="Bargues M."/>
            <person name="Terol J."/>
            <person name="Torres A."/>
            <person name="Perez-Perez A."/>
            <person name="Purnelle B."/>
            <person name="Bent E."/>
            <person name="Johnson S."/>
            <person name="Tacon D."/>
            <person name="Jesse T."/>
            <person name="Heijnen L."/>
            <person name="Schwarz S."/>
            <person name="Scholler P."/>
            <person name="Heber S."/>
            <person name="Francs P."/>
            <person name="Bielke C."/>
            <person name="Frishman D."/>
            <person name="Haase D."/>
            <person name="Lemcke K."/>
            <person name="Mewes H.-W."/>
            <person name="Stocker S."/>
            <person name="Zaccaria P."/>
            <person name="Bevan M."/>
            <person name="Wilson R.K."/>
            <person name="de la Bastide M."/>
            <person name="Habermann K."/>
            <person name="Parnell L."/>
            <person name="Dedhia N."/>
            <person name="Gnoj L."/>
            <person name="Schutz K."/>
            <person name="Huang E."/>
            <person name="Spiegel L."/>
            <person name="Sekhon M."/>
            <person name="Murray J."/>
            <person name="Sheet P."/>
            <person name="Cordes M."/>
            <person name="Abu-Threideh J."/>
            <person name="Stoneking T."/>
            <person name="Kalicki J."/>
            <person name="Graves T."/>
            <person name="Harmon G."/>
            <person name="Edwards J."/>
            <person name="Latreille P."/>
            <person name="Courtney L."/>
            <person name="Cloud J."/>
            <person name="Abbott A."/>
            <person name="Scott K."/>
            <person name="Johnson D."/>
            <person name="Minx P."/>
            <person name="Bentley D."/>
            <person name="Fulton B."/>
            <person name="Miller N."/>
            <person name="Greco T."/>
            <person name="Kemp K."/>
            <person name="Kramer J."/>
            <person name="Fulton L."/>
            <person name="Mardis E."/>
            <person name="Dante M."/>
            <person name="Pepin K."/>
            <person name="Hillier L.W."/>
            <person name="Nelson J."/>
            <person name="Spieth J."/>
            <person name="Ryan E."/>
            <person name="Andrews S."/>
            <person name="Geisel C."/>
            <person name="Layman D."/>
            <person name="Du H."/>
            <person name="Ali J."/>
            <person name="Berghoff A."/>
            <person name="Jones K."/>
            <person name="Drone K."/>
            <person name="Cotton M."/>
            <person name="Joshu C."/>
            <person name="Antonoiu B."/>
            <person name="Zidanic M."/>
            <person name="Strong C."/>
            <person name="Sun H."/>
            <person name="Lamar B."/>
            <person name="Yordan C."/>
            <person name="Ma P."/>
            <person name="Zhong J."/>
            <person name="Preston R."/>
            <person name="Vil D."/>
            <person name="Shekher M."/>
            <person name="Matero A."/>
            <person name="Shah R."/>
            <person name="Swaby I.K."/>
            <person name="O'Shaughnessy A."/>
            <person name="Rodriguez M."/>
            <person name="Hoffman J."/>
            <person name="Till S."/>
            <person name="Granat S."/>
            <person name="Shohdy N."/>
            <person name="Hasegawa A."/>
            <person name="Hameed A."/>
            <person name="Lodhi M."/>
            <person name="Johnson A."/>
            <person name="Chen E."/>
            <person name="Marra M.A."/>
            <person name="Martienssen R."/>
            <person name="McCombie W.R."/>
        </authorList>
    </citation>
    <scope>NUCLEOTIDE SEQUENCE [LARGE SCALE GENOMIC DNA]</scope>
    <source>
        <strain>cv. Columbia</strain>
    </source>
</reference>
<reference key="2">
    <citation type="journal article" date="2017" name="Plant J.">
        <title>Araport11: a complete reannotation of the Arabidopsis thaliana reference genome.</title>
        <authorList>
            <person name="Cheng C.Y."/>
            <person name="Krishnakumar V."/>
            <person name="Chan A.P."/>
            <person name="Thibaud-Nissen F."/>
            <person name="Schobel S."/>
            <person name="Town C.D."/>
        </authorList>
    </citation>
    <scope>GENOME REANNOTATION</scope>
    <source>
        <strain>cv. Columbia</strain>
    </source>
</reference>
<reference key="3">
    <citation type="journal article" date="2003" name="Science">
        <title>Empirical analysis of transcriptional activity in the Arabidopsis genome.</title>
        <authorList>
            <person name="Yamada K."/>
            <person name="Lim J."/>
            <person name="Dale J.M."/>
            <person name="Chen H."/>
            <person name="Shinn P."/>
            <person name="Palm C.J."/>
            <person name="Southwick A.M."/>
            <person name="Wu H.C."/>
            <person name="Kim C.J."/>
            <person name="Nguyen M."/>
            <person name="Pham P.K."/>
            <person name="Cheuk R.F."/>
            <person name="Karlin-Newmann G."/>
            <person name="Liu S.X."/>
            <person name="Lam B."/>
            <person name="Sakano H."/>
            <person name="Wu T."/>
            <person name="Yu G."/>
            <person name="Miranda M."/>
            <person name="Quach H.L."/>
            <person name="Tripp M."/>
            <person name="Chang C.H."/>
            <person name="Lee J.M."/>
            <person name="Toriumi M.J."/>
            <person name="Chan M.M."/>
            <person name="Tang C.C."/>
            <person name="Onodera C.S."/>
            <person name="Deng J.M."/>
            <person name="Akiyama K."/>
            <person name="Ansari Y."/>
            <person name="Arakawa T."/>
            <person name="Banh J."/>
            <person name="Banno F."/>
            <person name="Bowser L."/>
            <person name="Brooks S.Y."/>
            <person name="Carninci P."/>
            <person name="Chao Q."/>
            <person name="Choy N."/>
            <person name="Enju A."/>
            <person name="Goldsmith A.D."/>
            <person name="Gurjal M."/>
            <person name="Hansen N.F."/>
            <person name="Hayashizaki Y."/>
            <person name="Johnson-Hopson C."/>
            <person name="Hsuan V.W."/>
            <person name="Iida K."/>
            <person name="Karnes M."/>
            <person name="Khan S."/>
            <person name="Koesema E."/>
            <person name="Ishida J."/>
            <person name="Jiang P.X."/>
            <person name="Jones T."/>
            <person name="Kawai J."/>
            <person name="Kamiya A."/>
            <person name="Meyers C."/>
            <person name="Nakajima M."/>
            <person name="Narusaka M."/>
            <person name="Seki M."/>
            <person name="Sakurai T."/>
            <person name="Satou M."/>
            <person name="Tamse R."/>
            <person name="Vaysberg M."/>
            <person name="Wallender E.K."/>
            <person name="Wong C."/>
            <person name="Yamamura Y."/>
            <person name="Yuan S."/>
            <person name="Shinozaki K."/>
            <person name="Davis R.W."/>
            <person name="Theologis A."/>
            <person name="Ecker J.R."/>
        </authorList>
    </citation>
    <scope>NUCLEOTIDE SEQUENCE [LARGE SCALE MRNA]</scope>
    <source>
        <strain>cv. Columbia</strain>
    </source>
</reference>
<reference key="4">
    <citation type="journal article" date="2004" name="Plant Mol. Biol.">
        <title>Nomenclature for members of the expansin superfamily of genes and proteins.</title>
        <authorList>
            <person name="Kende H."/>
            <person name="Bradford K.J."/>
            <person name="Brummell D.A."/>
            <person name="Cho H.-T."/>
            <person name="Cosgrove D.J."/>
            <person name="Fleming A.J."/>
            <person name="Gehring C."/>
            <person name="Lee Y."/>
            <person name="McQueen-Mason S.J."/>
            <person name="Rose J.K.C."/>
            <person name="Voesenek L.A.C."/>
        </authorList>
    </citation>
    <scope>NOMENCLATURE</scope>
</reference>
<dbReference type="EMBL" id="AL161572">
    <property type="protein sequence ID" value="CAB79627.1"/>
    <property type="status" value="ALT_SEQ"/>
    <property type="molecule type" value="Genomic_DNA"/>
</dbReference>
<dbReference type="EMBL" id="CP002687">
    <property type="protein sequence ID" value="AEE85458.1"/>
    <property type="molecule type" value="Genomic_DNA"/>
</dbReference>
<dbReference type="EMBL" id="AY039986">
    <property type="protein sequence ID" value="AAK64163.1"/>
    <property type="molecule type" value="mRNA"/>
</dbReference>
<dbReference type="EMBL" id="AY133801">
    <property type="protein sequence ID" value="AAM91735.1"/>
    <property type="molecule type" value="mRNA"/>
</dbReference>
<dbReference type="RefSeq" id="NP_567803.1">
    <molecule id="Q9M0I2-1"/>
    <property type="nucleotide sequence ID" value="NM_118965.4"/>
</dbReference>
<dbReference type="SMR" id="Q9M0I2"/>
<dbReference type="BioGRID" id="14227">
    <property type="interactions" value="6"/>
</dbReference>
<dbReference type="FunCoup" id="Q9M0I2">
    <property type="interactions" value="189"/>
</dbReference>
<dbReference type="IntAct" id="Q9M0I2">
    <property type="interactions" value="6"/>
</dbReference>
<dbReference type="STRING" id="3702.Q9M0I2"/>
<dbReference type="PaxDb" id="3702-AT4G28250.1"/>
<dbReference type="ProteomicsDB" id="221820">
    <molecule id="Q9M0I2-1"/>
</dbReference>
<dbReference type="EnsemblPlants" id="AT4G28250.1">
    <molecule id="Q9M0I2-1"/>
    <property type="protein sequence ID" value="AT4G28250.1"/>
    <property type="gene ID" value="AT4G28250"/>
</dbReference>
<dbReference type="GeneID" id="828940"/>
<dbReference type="Gramene" id="AT4G28250.1">
    <molecule id="Q9M0I2-1"/>
    <property type="protein sequence ID" value="AT4G28250.1"/>
    <property type="gene ID" value="AT4G28250"/>
</dbReference>
<dbReference type="KEGG" id="ath:AT4G28250"/>
<dbReference type="Araport" id="AT4G28250"/>
<dbReference type="TAIR" id="AT4G28250">
    <property type="gene designation" value="EXPB3"/>
</dbReference>
<dbReference type="eggNOG" id="ENOG502QPVQ">
    <property type="taxonomic scope" value="Eukaryota"/>
</dbReference>
<dbReference type="HOGENOM" id="CLU_027462_1_2_1"/>
<dbReference type="InParanoid" id="Q9M0I2"/>
<dbReference type="OMA" id="HVWGASW"/>
<dbReference type="OrthoDB" id="406505at2759"/>
<dbReference type="PhylomeDB" id="Q9M0I2"/>
<dbReference type="PRO" id="PR:Q9M0I2"/>
<dbReference type="Proteomes" id="UP000006548">
    <property type="component" value="Chromosome 4"/>
</dbReference>
<dbReference type="ExpressionAtlas" id="Q9M0I2">
    <property type="expression patterns" value="baseline and differential"/>
</dbReference>
<dbReference type="GO" id="GO:0005576">
    <property type="term" value="C:extracellular region"/>
    <property type="evidence" value="ECO:0007669"/>
    <property type="project" value="UniProtKB-KW"/>
</dbReference>
<dbReference type="GO" id="GO:0016020">
    <property type="term" value="C:membrane"/>
    <property type="evidence" value="ECO:0007669"/>
    <property type="project" value="UniProtKB-SubCell"/>
</dbReference>
<dbReference type="GO" id="GO:0009506">
    <property type="term" value="C:plasmodesma"/>
    <property type="evidence" value="ECO:0007005"/>
    <property type="project" value="TAIR"/>
</dbReference>
<dbReference type="GO" id="GO:0009828">
    <property type="term" value="P:plant-type cell wall loosening"/>
    <property type="evidence" value="ECO:0000250"/>
    <property type="project" value="UniProtKB"/>
</dbReference>
<dbReference type="GO" id="GO:0019953">
    <property type="term" value="P:sexual reproduction"/>
    <property type="evidence" value="ECO:0007669"/>
    <property type="project" value="InterPro"/>
</dbReference>
<dbReference type="GO" id="GO:0006949">
    <property type="term" value="P:syncytium formation"/>
    <property type="evidence" value="ECO:0000270"/>
    <property type="project" value="TAIR"/>
</dbReference>
<dbReference type="CDD" id="cd22275">
    <property type="entry name" value="DPBB_EXPB_N"/>
    <property type="match status" value="1"/>
</dbReference>
<dbReference type="FunFam" id="2.60.40.760:FF:000002">
    <property type="entry name" value="Beta-expansin 3"/>
    <property type="match status" value="1"/>
</dbReference>
<dbReference type="FunFam" id="2.40.40.10:FF:000004">
    <property type="entry name" value="Expansin B3"/>
    <property type="match status" value="1"/>
</dbReference>
<dbReference type="Gene3D" id="2.60.40.760">
    <property type="entry name" value="Expansin, cellulose-binding-like domain"/>
    <property type="match status" value="1"/>
</dbReference>
<dbReference type="Gene3D" id="2.40.40.10">
    <property type="entry name" value="RlpA-like domain"/>
    <property type="match status" value="1"/>
</dbReference>
<dbReference type="InterPro" id="IPR007118">
    <property type="entry name" value="Expan_Lol_pI"/>
</dbReference>
<dbReference type="InterPro" id="IPR007112">
    <property type="entry name" value="Expansin/allergen_DPBB_dom"/>
</dbReference>
<dbReference type="InterPro" id="IPR007117">
    <property type="entry name" value="Expansin_CBD"/>
</dbReference>
<dbReference type="InterPro" id="IPR036749">
    <property type="entry name" value="Expansin_CBD_sf"/>
</dbReference>
<dbReference type="InterPro" id="IPR005795">
    <property type="entry name" value="LolPI"/>
</dbReference>
<dbReference type="InterPro" id="IPR009009">
    <property type="entry name" value="RlpA-like_DPBB"/>
</dbReference>
<dbReference type="InterPro" id="IPR036908">
    <property type="entry name" value="RlpA-like_sf"/>
</dbReference>
<dbReference type="PANTHER" id="PTHR31692">
    <property type="entry name" value="EXPANSIN-B3"/>
    <property type="match status" value="1"/>
</dbReference>
<dbReference type="PANTHER" id="PTHR31692:SF5">
    <property type="entry name" value="EXPANSIN-B3"/>
    <property type="match status" value="1"/>
</dbReference>
<dbReference type="Pfam" id="PF03330">
    <property type="entry name" value="DPBB_1"/>
    <property type="match status" value="1"/>
</dbReference>
<dbReference type="Pfam" id="PF01357">
    <property type="entry name" value="Expansin_C"/>
    <property type="match status" value="1"/>
</dbReference>
<dbReference type="PRINTS" id="PR01225">
    <property type="entry name" value="EXPANSNFAMLY"/>
</dbReference>
<dbReference type="PRINTS" id="PR00829">
    <property type="entry name" value="LOLP1ALLERGN"/>
</dbReference>
<dbReference type="SMART" id="SM00837">
    <property type="entry name" value="DPBB_1"/>
    <property type="match status" value="1"/>
</dbReference>
<dbReference type="SUPFAM" id="SSF50685">
    <property type="entry name" value="Barwin-like endoglucanases"/>
    <property type="match status" value="1"/>
</dbReference>
<dbReference type="SUPFAM" id="SSF49590">
    <property type="entry name" value="PHL pollen allergen"/>
    <property type="match status" value="1"/>
</dbReference>
<dbReference type="PROSITE" id="PS50843">
    <property type="entry name" value="EXPANSIN_CBD"/>
    <property type="match status" value="1"/>
</dbReference>
<dbReference type="PROSITE" id="PS50842">
    <property type="entry name" value="EXPANSIN_EG45"/>
    <property type="match status" value="1"/>
</dbReference>
<accession>Q9M0I2</accession>
<name>EXPB3_ARATH</name>
<evidence type="ECO:0000250" key="1"/>
<evidence type="ECO:0000255" key="2"/>
<evidence type="ECO:0000255" key="3">
    <source>
        <dbReference type="PROSITE-ProRule" id="PRU00078"/>
    </source>
</evidence>
<evidence type="ECO:0000255" key="4">
    <source>
        <dbReference type="PROSITE-ProRule" id="PRU00079"/>
    </source>
</evidence>
<evidence type="ECO:0000305" key="5"/>
<proteinExistence type="evidence at transcript level"/>
<keyword id="KW-0025">Alternative splicing</keyword>
<keyword id="KW-0134">Cell wall</keyword>
<keyword id="KW-0961">Cell wall biogenesis/degradation</keyword>
<keyword id="KW-1015">Disulfide bond</keyword>
<keyword id="KW-0472">Membrane</keyword>
<keyword id="KW-1185">Reference proteome</keyword>
<keyword id="KW-0964">Secreted</keyword>
<keyword id="KW-0732">Signal</keyword>
<comment type="function">
    <text evidence="1">May cause loosening and extension of plant cell walls by disrupting non-covalent bonding between cellulose microfibrils and matrix glucans. No enzymatic activity has been found (By similarity).</text>
</comment>
<comment type="subcellular location">
    <subcellularLocation>
        <location>Secreted</location>
        <location>Cell wall</location>
    </subcellularLocation>
    <subcellularLocation>
        <location>Membrane</location>
        <topology>Peripheral membrane protein</topology>
    </subcellularLocation>
</comment>
<comment type="alternative products">
    <event type="alternative splicing"/>
    <isoform>
        <id>Q9M0I2-1</id>
        <name>1</name>
        <sequence type="displayed"/>
    </isoform>
    <text>A number of isoforms are produced. According to EST sequences.</text>
</comment>
<comment type="similarity">
    <text evidence="5">Belongs to the expansin family. Expansin B subfamily.</text>
</comment>
<comment type="sequence caution" evidence="5">
    <conflict type="erroneous gene model prediction">
        <sequence resource="EMBL-CDS" id="CAB79627"/>
    </conflict>
</comment>
<comment type="online information" name="EXPANSIN homepage">
    <link uri="https://www.dept.psu.edu/biology/groups/expansins/index.htm"/>
</comment>
<feature type="signal peptide" evidence="2">
    <location>
        <begin position="1"/>
        <end position="25"/>
    </location>
</feature>
<feature type="chain" id="PRO_0000008709" description="Expansin-B3">
    <location>
        <begin position="26"/>
        <end position="264"/>
    </location>
</feature>
<feature type="domain" description="Expansin-like EG45" evidence="4">
    <location>
        <begin position="54"/>
        <end position="162"/>
    </location>
</feature>
<feature type="domain" description="Expansin-like CBD" evidence="3">
    <location>
        <begin position="175"/>
        <end position="256"/>
    </location>
</feature>
<feature type="disulfide bond" evidence="4">
    <location>
        <begin position="57"/>
        <end position="86"/>
    </location>
</feature>
<feature type="disulfide bond" evidence="4">
    <location>
        <begin position="89"/>
        <end position="157"/>
    </location>
</feature>
<feature type="disulfide bond" evidence="4">
    <location>
        <begin position="94"/>
        <end position="100"/>
    </location>
</feature>
<gene>
    <name type="primary">EXPB3</name>
    <name type="ordered locus">At4g28250</name>
    <name type="ORF">F26K10.130</name>
</gene>
<protein>
    <recommendedName>
        <fullName>Expansin-B3</fullName>
        <shortName>At-EXPB3</shortName>
        <shortName>AtEXPB3</shortName>
    </recommendedName>
    <alternativeName>
        <fullName>Ath-ExpBeta-1.6</fullName>
    </alternativeName>
    <alternativeName>
        <fullName>Beta-expansin-3</fullName>
    </alternativeName>
</protein>